<comment type="function">
    <text evidence="1">Catalyzes the first step in hexosamine metabolism, converting fructose-6P into glucosamine-6P using glutamine as a nitrogen source.</text>
</comment>
<comment type="catalytic activity">
    <reaction evidence="1">
        <text>D-fructose 6-phosphate + L-glutamine = D-glucosamine 6-phosphate + L-glutamate</text>
        <dbReference type="Rhea" id="RHEA:13237"/>
        <dbReference type="ChEBI" id="CHEBI:29985"/>
        <dbReference type="ChEBI" id="CHEBI:58359"/>
        <dbReference type="ChEBI" id="CHEBI:58725"/>
        <dbReference type="ChEBI" id="CHEBI:61527"/>
        <dbReference type="EC" id="2.6.1.16"/>
    </reaction>
</comment>
<comment type="subunit">
    <text evidence="1">Homodimer.</text>
</comment>
<comment type="subcellular location">
    <subcellularLocation>
        <location evidence="1">Cytoplasm</location>
    </subcellularLocation>
</comment>
<gene>
    <name evidence="1" type="primary">glmS</name>
    <name type="ordered locus">BT9727_0153</name>
</gene>
<accession>Q6HPL2</accession>
<name>GLMS_BACHK</name>
<sequence length="600" mass="65808">MCGIVGFIGEQDAKEILLKGLEKLEYRGYDSAGIAVQAENGVVVYKEKGRIAKLREIVDENVAASVGIGHTRWATHGVPSKVNAHPHQSTSKRFTLVHNGVIENYELVKKEYLQDVTFVSETDTEVIVQLMEQQVSTGLSVEEAFRNTLSLLHGSYAIGLLDAENPNMIYVAKNKSPLLVGVGDNFNVVASDAMAMLQVTDQFIELMDKEIVIVMKESITIKNLQGETIERAPFTAELDASDIEKGTYPHFMLKEIDEQPLVIRNIIQKYQDENGEIELDQDIRNAILDSDRIYIIACGTSYHAGLVGKQFIEKFAKMPVEVHVASEFSYNMPLLTERPFFIYISQSGETADSRAVLVQTNEMGHKALTITNVPGSTLSREADYTLPLYAGPEIAVASTKAYTAQLAVLSILAADIAKAKGEVLDFDLTHELGLVANAMVQLCDQKEEMDALAKQFLATTRNCFFIGRSVDFYVGLEGALKLKEISYIQAEGFAGGELKHGTIALIENGTPVIALATQEHVNLGIRGNVKEVVARGANPCIISMKGLEMEGDSFVLPAVHEALAPLVAVIPLQLISYYAALHRECDVDKPRNLAKSVTVE</sequence>
<reference key="1">
    <citation type="journal article" date="2006" name="J. Bacteriol.">
        <title>Pathogenomic sequence analysis of Bacillus cereus and Bacillus thuringiensis isolates closely related to Bacillus anthracis.</title>
        <authorList>
            <person name="Han C.S."/>
            <person name="Xie G."/>
            <person name="Challacombe J.F."/>
            <person name="Altherr M.R."/>
            <person name="Bhotika S.S."/>
            <person name="Bruce D."/>
            <person name="Campbell C.S."/>
            <person name="Campbell M.L."/>
            <person name="Chen J."/>
            <person name="Chertkov O."/>
            <person name="Cleland C."/>
            <person name="Dimitrijevic M."/>
            <person name="Doggett N.A."/>
            <person name="Fawcett J.J."/>
            <person name="Glavina T."/>
            <person name="Goodwin L.A."/>
            <person name="Hill K.K."/>
            <person name="Hitchcock P."/>
            <person name="Jackson P.J."/>
            <person name="Keim P."/>
            <person name="Kewalramani A.R."/>
            <person name="Longmire J."/>
            <person name="Lucas S."/>
            <person name="Malfatti S."/>
            <person name="McMurry K."/>
            <person name="Meincke L.J."/>
            <person name="Misra M."/>
            <person name="Moseman B.L."/>
            <person name="Mundt M."/>
            <person name="Munk A.C."/>
            <person name="Okinaka R.T."/>
            <person name="Parson-Quintana B."/>
            <person name="Reilly L.P."/>
            <person name="Richardson P."/>
            <person name="Robinson D.L."/>
            <person name="Rubin E."/>
            <person name="Saunders E."/>
            <person name="Tapia R."/>
            <person name="Tesmer J.G."/>
            <person name="Thayer N."/>
            <person name="Thompson L.S."/>
            <person name="Tice H."/>
            <person name="Ticknor L.O."/>
            <person name="Wills P.L."/>
            <person name="Brettin T.S."/>
            <person name="Gilna P."/>
        </authorList>
    </citation>
    <scope>NUCLEOTIDE SEQUENCE [LARGE SCALE GENOMIC DNA]</scope>
    <source>
        <strain>97-27</strain>
    </source>
</reference>
<evidence type="ECO:0000255" key="1">
    <source>
        <dbReference type="HAMAP-Rule" id="MF_00164"/>
    </source>
</evidence>
<organism>
    <name type="scientific">Bacillus thuringiensis subsp. konkukian (strain 97-27)</name>
    <dbReference type="NCBI Taxonomy" id="281309"/>
    <lineage>
        <taxon>Bacteria</taxon>
        <taxon>Bacillati</taxon>
        <taxon>Bacillota</taxon>
        <taxon>Bacilli</taxon>
        <taxon>Bacillales</taxon>
        <taxon>Bacillaceae</taxon>
        <taxon>Bacillus</taxon>
        <taxon>Bacillus cereus group</taxon>
    </lineage>
</organism>
<feature type="initiator methionine" description="Removed" evidence="1">
    <location>
        <position position="1"/>
    </location>
</feature>
<feature type="chain" id="PRO_0000135297" description="Glutamine--fructose-6-phosphate aminotransferase [isomerizing]">
    <location>
        <begin position="2"/>
        <end position="600"/>
    </location>
</feature>
<feature type="domain" description="Glutamine amidotransferase type-2" evidence="1">
    <location>
        <begin position="2"/>
        <end position="217"/>
    </location>
</feature>
<feature type="domain" description="SIS 1" evidence="1">
    <location>
        <begin position="283"/>
        <end position="422"/>
    </location>
</feature>
<feature type="domain" description="SIS 2" evidence="1">
    <location>
        <begin position="452"/>
        <end position="590"/>
    </location>
</feature>
<feature type="active site" description="Nucleophile; for GATase activity" evidence="1">
    <location>
        <position position="2"/>
    </location>
</feature>
<feature type="active site" description="For Fru-6P isomerization activity" evidence="1">
    <location>
        <position position="595"/>
    </location>
</feature>
<dbReference type="EC" id="2.6.1.16" evidence="1"/>
<dbReference type="EMBL" id="AE017355">
    <property type="protein sequence ID" value="AAT61419.1"/>
    <property type="molecule type" value="Genomic_DNA"/>
</dbReference>
<dbReference type="RefSeq" id="WP_000334158.1">
    <property type="nucleotide sequence ID" value="NC_005957.1"/>
</dbReference>
<dbReference type="RefSeq" id="YP_034508.1">
    <property type="nucleotide sequence ID" value="NC_005957.1"/>
</dbReference>
<dbReference type="SMR" id="Q6HPL2"/>
<dbReference type="KEGG" id="btk:BT9727_0153"/>
<dbReference type="PATRIC" id="fig|281309.8.peg.156"/>
<dbReference type="HOGENOM" id="CLU_012520_7_1_9"/>
<dbReference type="Proteomes" id="UP000001301">
    <property type="component" value="Chromosome"/>
</dbReference>
<dbReference type="GO" id="GO:0005829">
    <property type="term" value="C:cytosol"/>
    <property type="evidence" value="ECO:0007669"/>
    <property type="project" value="TreeGrafter"/>
</dbReference>
<dbReference type="GO" id="GO:0097367">
    <property type="term" value="F:carbohydrate derivative binding"/>
    <property type="evidence" value="ECO:0007669"/>
    <property type="project" value="InterPro"/>
</dbReference>
<dbReference type="GO" id="GO:0004360">
    <property type="term" value="F:glutamine-fructose-6-phosphate transaminase (isomerizing) activity"/>
    <property type="evidence" value="ECO:0007669"/>
    <property type="project" value="UniProtKB-UniRule"/>
</dbReference>
<dbReference type="GO" id="GO:0005975">
    <property type="term" value="P:carbohydrate metabolic process"/>
    <property type="evidence" value="ECO:0007669"/>
    <property type="project" value="UniProtKB-UniRule"/>
</dbReference>
<dbReference type="GO" id="GO:0006002">
    <property type="term" value="P:fructose 6-phosphate metabolic process"/>
    <property type="evidence" value="ECO:0007669"/>
    <property type="project" value="TreeGrafter"/>
</dbReference>
<dbReference type="GO" id="GO:0006487">
    <property type="term" value="P:protein N-linked glycosylation"/>
    <property type="evidence" value="ECO:0007669"/>
    <property type="project" value="TreeGrafter"/>
</dbReference>
<dbReference type="GO" id="GO:0006047">
    <property type="term" value="P:UDP-N-acetylglucosamine metabolic process"/>
    <property type="evidence" value="ECO:0007669"/>
    <property type="project" value="TreeGrafter"/>
</dbReference>
<dbReference type="CDD" id="cd00714">
    <property type="entry name" value="GFAT"/>
    <property type="match status" value="1"/>
</dbReference>
<dbReference type="CDD" id="cd05008">
    <property type="entry name" value="SIS_GlmS_GlmD_1"/>
    <property type="match status" value="1"/>
</dbReference>
<dbReference type="CDD" id="cd05009">
    <property type="entry name" value="SIS_GlmS_GlmD_2"/>
    <property type="match status" value="1"/>
</dbReference>
<dbReference type="FunFam" id="3.40.50.10490:FF:000022">
    <property type="entry name" value="Glutamine--fructose-6-phosphate aminotransferase [isomerizing]"/>
    <property type="match status" value="1"/>
</dbReference>
<dbReference type="FunFam" id="3.60.20.10:FF:000006">
    <property type="entry name" value="Glutamine--fructose-6-phosphate aminotransferase [isomerizing]"/>
    <property type="match status" value="1"/>
</dbReference>
<dbReference type="Gene3D" id="3.40.50.10490">
    <property type="entry name" value="Glucose-6-phosphate isomerase like protein, domain 1"/>
    <property type="match status" value="2"/>
</dbReference>
<dbReference type="Gene3D" id="3.60.20.10">
    <property type="entry name" value="Glutamine Phosphoribosylpyrophosphate, subunit 1, domain 1"/>
    <property type="match status" value="1"/>
</dbReference>
<dbReference type="HAMAP" id="MF_00164">
    <property type="entry name" value="GlmS"/>
    <property type="match status" value="1"/>
</dbReference>
<dbReference type="InterPro" id="IPR017932">
    <property type="entry name" value="GATase_2_dom"/>
</dbReference>
<dbReference type="InterPro" id="IPR005855">
    <property type="entry name" value="GFAT"/>
</dbReference>
<dbReference type="InterPro" id="IPR047084">
    <property type="entry name" value="GFAT_N"/>
</dbReference>
<dbReference type="InterPro" id="IPR035466">
    <property type="entry name" value="GlmS/AgaS_SIS"/>
</dbReference>
<dbReference type="InterPro" id="IPR035490">
    <property type="entry name" value="GlmS/FrlB_SIS"/>
</dbReference>
<dbReference type="InterPro" id="IPR029055">
    <property type="entry name" value="Ntn_hydrolases_N"/>
</dbReference>
<dbReference type="InterPro" id="IPR001347">
    <property type="entry name" value="SIS_dom"/>
</dbReference>
<dbReference type="InterPro" id="IPR046348">
    <property type="entry name" value="SIS_dom_sf"/>
</dbReference>
<dbReference type="NCBIfam" id="TIGR01135">
    <property type="entry name" value="glmS"/>
    <property type="match status" value="1"/>
</dbReference>
<dbReference type="NCBIfam" id="NF001484">
    <property type="entry name" value="PRK00331.1"/>
    <property type="match status" value="1"/>
</dbReference>
<dbReference type="PANTHER" id="PTHR10937">
    <property type="entry name" value="GLUCOSAMINE--FRUCTOSE-6-PHOSPHATE AMINOTRANSFERASE, ISOMERIZING"/>
    <property type="match status" value="1"/>
</dbReference>
<dbReference type="PANTHER" id="PTHR10937:SF0">
    <property type="entry name" value="GLUTAMINE--FRUCTOSE-6-PHOSPHATE TRANSAMINASE (ISOMERIZING)"/>
    <property type="match status" value="1"/>
</dbReference>
<dbReference type="Pfam" id="PF13522">
    <property type="entry name" value="GATase_6"/>
    <property type="match status" value="1"/>
</dbReference>
<dbReference type="Pfam" id="PF01380">
    <property type="entry name" value="SIS"/>
    <property type="match status" value="2"/>
</dbReference>
<dbReference type="SUPFAM" id="SSF56235">
    <property type="entry name" value="N-terminal nucleophile aminohydrolases (Ntn hydrolases)"/>
    <property type="match status" value="1"/>
</dbReference>
<dbReference type="SUPFAM" id="SSF53697">
    <property type="entry name" value="SIS domain"/>
    <property type="match status" value="1"/>
</dbReference>
<dbReference type="PROSITE" id="PS51278">
    <property type="entry name" value="GATASE_TYPE_2"/>
    <property type="match status" value="1"/>
</dbReference>
<dbReference type="PROSITE" id="PS51464">
    <property type="entry name" value="SIS"/>
    <property type="match status" value="2"/>
</dbReference>
<proteinExistence type="inferred from homology"/>
<protein>
    <recommendedName>
        <fullName evidence="1">Glutamine--fructose-6-phosphate aminotransferase [isomerizing]</fullName>
        <ecNumber evidence="1">2.6.1.16</ecNumber>
    </recommendedName>
    <alternativeName>
        <fullName evidence="1">D-fructose-6-phosphate amidotransferase</fullName>
    </alternativeName>
    <alternativeName>
        <fullName evidence="1">GFAT</fullName>
    </alternativeName>
    <alternativeName>
        <fullName evidence="1">Glucosamine-6-phosphate synthase</fullName>
    </alternativeName>
    <alternativeName>
        <fullName evidence="1">Hexosephosphate aminotransferase</fullName>
    </alternativeName>
    <alternativeName>
        <fullName evidence="1">L-glutamine--D-fructose-6-phosphate amidotransferase</fullName>
    </alternativeName>
</protein>
<keyword id="KW-0032">Aminotransferase</keyword>
<keyword id="KW-0963">Cytoplasm</keyword>
<keyword id="KW-0315">Glutamine amidotransferase</keyword>
<keyword id="KW-0677">Repeat</keyword>
<keyword id="KW-0808">Transferase</keyword>